<accession>P84196</accession>
<organism>
    <name type="scientific">Gloeophyllum trabeum</name>
    <name type="common">Brown rot fungus</name>
    <name type="synonym">Agaricus trabeus</name>
    <dbReference type="NCBI Taxonomy" id="104355"/>
    <lineage>
        <taxon>Eukaryota</taxon>
        <taxon>Fungi</taxon>
        <taxon>Dikarya</taxon>
        <taxon>Basidiomycota</taxon>
        <taxon>Agaricomycotina</taxon>
        <taxon>Agaricomycetes</taxon>
        <taxon>Gloeophyllales</taxon>
        <taxon>Gloeophyllaceae</taxon>
        <taxon>Gloeophyllum</taxon>
    </lineage>
</organism>
<feature type="chain" id="PRO_0000184073" description="Endoglucanase Cel12A">
    <location>
        <begin position="1" status="less than"/>
        <end position="36" status="greater than"/>
    </location>
</feature>
<feature type="non-consecutive residues" evidence="3">
    <location>
        <begin position="13"/>
        <end position="14"/>
    </location>
</feature>
<feature type="non-consecutive residues" evidence="3">
    <location>
        <begin position="26"/>
        <end position="27"/>
    </location>
</feature>
<feature type="non-terminal residue" evidence="3">
    <location>
        <position position="1"/>
    </location>
</feature>
<feature type="non-terminal residue" evidence="3">
    <location>
        <position position="36"/>
    </location>
</feature>
<keyword id="KW-0119">Carbohydrate metabolism</keyword>
<keyword id="KW-0136">Cellulose degradation</keyword>
<keyword id="KW-0903">Direct protein sequencing</keyword>
<keyword id="KW-0326">Glycosidase</keyword>
<keyword id="KW-0378">Hydrolase</keyword>
<keyword id="KW-0624">Polysaccharide degradation</keyword>
<keyword id="KW-0964">Secreted</keyword>
<reference evidence="4" key="1">
    <citation type="journal article" date="2005" name="Appl. Environ. Microbiol.">
        <title>Processive endoglucanase active in crystalline cellulose hydrolysis by the brown rot basidiomycete Gloeophyllum trabeum.</title>
        <authorList>
            <person name="Cohen R."/>
            <person name="Suzuki M.R."/>
            <person name="Hammel K.E."/>
        </authorList>
    </citation>
    <scope>PROTEIN SEQUENCE</scope>
    <scope>FUNCTION</scope>
    <scope>CATALYTIC ACTIVITY</scope>
    <scope>SUBCELLULAR LOCATION</scope>
    <source>
        <strain evidence="2">ATCC 11539 / Madison 617</strain>
    </source>
</reference>
<dbReference type="EC" id="3.2.1.4"/>
<dbReference type="CAZy" id="GH12">
    <property type="family name" value="Glycoside Hydrolase Family 12"/>
</dbReference>
<dbReference type="BioCyc" id="MetaCyc:MONOMER-16932"/>
<dbReference type="GO" id="GO:0005576">
    <property type="term" value="C:extracellular region"/>
    <property type="evidence" value="ECO:0000314"/>
    <property type="project" value="UniProtKB"/>
</dbReference>
<dbReference type="GO" id="GO:0008810">
    <property type="term" value="F:cellulase activity"/>
    <property type="evidence" value="ECO:0000314"/>
    <property type="project" value="UniProtKB"/>
</dbReference>
<dbReference type="GO" id="GO:0030245">
    <property type="term" value="P:cellulose catabolic process"/>
    <property type="evidence" value="ECO:0000314"/>
    <property type="project" value="UniProtKB"/>
</dbReference>
<comment type="function">
    <text evidence="2">Has carboxymethylcellulase activity.</text>
</comment>
<comment type="catalytic activity">
    <reaction evidence="2">
        <text>Endohydrolysis of (1-&gt;4)-beta-D-glucosidic linkages in cellulose, lichenin and cereal beta-D-glucans.</text>
        <dbReference type="EC" id="3.2.1.4"/>
    </reaction>
</comment>
<comment type="subcellular location">
    <subcellularLocation>
        <location evidence="2">Secreted</location>
        <location evidence="2">Extracellular space</location>
    </subcellularLocation>
</comment>
<comment type="similarity">
    <text evidence="1">Belongs to the glycosyl hydrolase 12 (cellulase H) family.</text>
</comment>
<protein>
    <recommendedName>
        <fullName>Endoglucanase Cel12A</fullName>
        <ecNumber>3.2.1.4</ecNumber>
    </recommendedName>
    <alternativeName>
        <fullName>Cellulase</fullName>
    </alternativeName>
    <alternativeName>
        <fullName>Endo-1,4-beta-glucanase</fullName>
    </alternativeName>
</protein>
<evidence type="ECO:0000255" key="1"/>
<evidence type="ECO:0000269" key="2">
    <source>
    </source>
</evidence>
<evidence type="ECO:0000303" key="3">
    <source>
    </source>
</evidence>
<evidence type="ECO:0000305" key="4"/>
<proteinExistence type="evidence at protein level"/>
<sequence length="36" mass="3726">GVQISQISSFPTTADVSYDFNITNALGGIQPVGSLK</sequence>
<name>GUNB_GLOTR</name>